<protein>
    <recommendedName>
        <fullName>G-protein coupled receptor 157</fullName>
    </recommendedName>
</protein>
<gene>
    <name type="primary">Gpr157</name>
</gene>
<reference key="1">
    <citation type="journal article" date="2005" name="Science">
        <title>The transcriptional landscape of the mammalian genome.</title>
        <authorList>
            <person name="Carninci P."/>
            <person name="Kasukawa T."/>
            <person name="Katayama S."/>
            <person name="Gough J."/>
            <person name="Frith M.C."/>
            <person name="Maeda N."/>
            <person name="Oyama R."/>
            <person name="Ravasi T."/>
            <person name="Lenhard B."/>
            <person name="Wells C."/>
            <person name="Kodzius R."/>
            <person name="Shimokawa K."/>
            <person name="Bajic V.B."/>
            <person name="Brenner S.E."/>
            <person name="Batalov S."/>
            <person name="Forrest A.R."/>
            <person name="Zavolan M."/>
            <person name="Davis M.J."/>
            <person name="Wilming L.G."/>
            <person name="Aidinis V."/>
            <person name="Allen J.E."/>
            <person name="Ambesi-Impiombato A."/>
            <person name="Apweiler R."/>
            <person name="Aturaliya R.N."/>
            <person name="Bailey T.L."/>
            <person name="Bansal M."/>
            <person name="Baxter L."/>
            <person name="Beisel K.W."/>
            <person name="Bersano T."/>
            <person name="Bono H."/>
            <person name="Chalk A.M."/>
            <person name="Chiu K.P."/>
            <person name="Choudhary V."/>
            <person name="Christoffels A."/>
            <person name="Clutterbuck D.R."/>
            <person name="Crowe M.L."/>
            <person name="Dalla E."/>
            <person name="Dalrymple B.P."/>
            <person name="de Bono B."/>
            <person name="Della Gatta G."/>
            <person name="di Bernardo D."/>
            <person name="Down T."/>
            <person name="Engstrom P."/>
            <person name="Fagiolini M."/>
            <person name="Faulkner G."/>
            <person name="Fletcher C.F."/>
            <person name="Fukushima T."/>
            <person name="Furuno M."/>
            <person name="Futaki S."/>
            <person name="Gariboldi M."/>
            <person name="Georgii-Hemming P."/>
            <person name="Gingeras T.R."/>
            <person name="Gojobori T."/>
            <person name="Green R.E."/>
            <person name="Gustincich S."/>
            <person name="Harbers M."/>
            <person name="Hayashi Y."/>
            <person name="Hensch T.K."/>
            <person name="Hirokawa N."/>
            <person name="Hill D."/>
            <person name="Huminiecki L."/>
            <person name="Iacono M."/>
            <person name="Ikeo K."/>
            <person name="Iwama A."/>
            <person name="Ishikawa T."/>
            <person name="Jakt M."/>
            <person name="Kanapin A."/>
            <person name="Katoh M."/>
            <person name="Kawasawa Y."/>
            <person name="Kelso J."/>
            <person name="Kitamura H."/>
            <person name="Kitano H."/>
            <person name="Kollias G."/>
            <person name="Krishnan S.P."/>
            <person name="Kruger A."/>
            <person name="Kummerfeld S.K."/>
            <person name="Kurochkin I.V."/>
            <person name="Lareau L.F."/>
            <person name="Lazarevic D."/>
            <person name="Lipovich L."/>
            <person name="Liu J."/>
            <person name="Liuni S."/>
            <person name="McWilliam S."/>
            <person name="Madan Babu M."/>
            <person name="Madera M."/>
            <person name="Marchionni L."/>
            <person name="Matsuda H."/>
            <person name="Matsuzawa S."/>
            <person name="Miki H."/>
            <person name="Mignone F."/>
            <person name="Miyake S."/>
            <person name="Morris K."/>
            <person name="Mottagui-Tabar S."/>
            <person name="Mulder N."/>
            <person name="Nakano N."/>
            <person name="Nakauchi H."/>
            <person name="Ng P."/>
            <person name="Nilsson R."/>
            <person name="Nishiguchi S."/>
            <person name="Nishikawa S."/>
            <person name="Nori F."/>
            <person name="Ohara O."/>
            <person name="Okazaki Y."/>
            <person name="Orlando V."/>
            <person name="Pang K.C."/>
            <person name="Pavan W.J."/>
            <person name="Pavesi G."/>
            <person name="Pesole G."/>
            <person name="Petrovsky N."/>
            <person name="Piazza S."/>
            <person name="Reed J."/>
            <person name="Reid J.F."/>
            <person name="Ring B.Z."/>
            <person name="Ringwald M."/>
            <person name="Rost B."/>
            <person name="Ruan Y."/>
            <person name="Salzberg S.L."/>
            <person name="Sandelin A."/>
            <person name="Schneider C."/>
            <person name="Schoenbach C."/>
            <person name="Sekiguchi K."/>
            <person name="Semple C.A."/>
            <person name="Seno S."/>
            <person name="Sessa L."/>
            <person name="Sheng Y."/>
            <person name="Shibata Y."/>
            <person name="Shimada H."/>
            <person name="Shimada K."/>
            <person name="Silva D."/>
            <person name="Sinclair B."/>
            <person name="Sperling S."/>
            <person name="Stupka E."/>
            <person name="Sugiura K."/>
            <person name="Sultana R."/>
            <person name="Takenaka Y."/>
            <person name="Taki K."/>
            <person name="Tammoja K."/>
            <person name="Tan S.L."/>
            <person name="Tang S."/>
            <person name="Taylor M.S."/>
            <person name="Tegner J."/>
            <person name="Teichmann S.A."/>
            <person name="Ueda H.R."/>
            <person name="van Nimwegen E."/>
            <person name="Verardo R."/>
            <person name="Wei C.L."/>
            <person name="Yagi K."/>
            <person name="Yamanishi H."/>
            <person name="Zabarovsky E."/>
            <person name="Zhu S."/>
            <person name="Zimmer A."/>
            <person name="Hide W."/>
            <person name="Bult C."/>
            <person name="Grimmond S.M."/>
            <person name="Teasdale R.D."/>
            <person name="Liu E.T."/>
            <person name="Brusic V."/>
            <person name="Quackenbush J."/>
            <person name="Wahlestedt C."/>
            <person name="Mattick J.S."/>
            <person name="Hume D.A."/>
            <person name="Kai C."/>
            <person name="Sasaki D."/>
            <person name="Tomaru Y."/>
            <person name="Fukuda S."/>
            <person name="Kanamori-Katayama M."/>
            <person name="Suzuki M."/>
            <person name="Aoki J."/>
            <person name="Arakawa T."/>
            <person name="Iida J."/>
            <person name="Imamura K."/>
            <person name="Itoh M."/>
            <person name="Kato T."/>
            <person name="Kawaji H."/>
            <person name="Kawagashira N."/>
            <person name="Kawashima T."/>
            <person name="Kojima M."/>
            <person name="Kondo S."/>
            <person name="Konno H."/>
            <person name="Nakano K."/>
            <person name="Ninomiya N."/>
            <person name="Nishio T."/>
            <person name="Okada M."/>
            <person name="Plessy C."/>
            <person name="Shibata K."/>
            <person name="Shiraki T."/>
            <person name="Suzuki S."/>
            <person name="Tagami M."/>
            <person name="Waki K."/>
            <person name="Watahiki A."/>
            <person name="Okamura-Oho Y."/>
            <person name="Suzuki H."/>
            <person name="Kawai J."/>
            <person name="Hayashizaki Y."/>
        </authorList>
    </citation>
    <scope>NUCLEOTIDE SEQUENCE [LARGE SCALE MRNA]</scope>
    <source>
        <strain>C57BL/6J</strain>
    </source>
</reference>
<reference key="2">
    <citation type="journal article" date="2016" name="Sci. Rep.">
        <title>The G protein-coupled receptor GPR157 regulates neuronal differentiation of radial glial progenitors through the Gq-IP3 pathway.</title>
        <authorList>
            <person name="Takeo Y."/>
            <person name="Kurabayashi N."/>
            <person name="Nguyen M.D."/>
            <person name="Sanada K."/>
        </authorList>
    </citation>
    <scope>TISSUE SPECIFICITY</scope>
    <scope>FUNCTION</scope>
    <scope>DEVELOPMENTAL STAGE</scope>
    <scope>SUBCELLULAR LOCATION</scope>
</reference>
<sequence>MPSPAPPTELLPWERAVVLLSCALSALGSGLLVATHALWPDLRSRARRLLLFLSLADLLSAASYFYGVLQDFAGTSWDCVLQGALSTFANTSSFFWTVAIALYLYLSIVRTTRGPSTDHLIWAFHLISWGVPLAITVAAVSLKKIGYDASDVSVGWCWINLEAEDRVLWMLLTGKLWEMLAYILLPLLYLLVRKHINRAHQALSEYRPICEGRQLQRGSSTSTADKKLVLIPLIFICLRVWSTVRFVLTLCGSPAVQTPVLVVLHGIGNTFQGGANCIMFVLCTRAVRTRLFSLCCCCPRPSTQSPPGAPTPPKIGESQESRRTPEVPST</sequence>
<feature type="chain" id="PRO_0000070340" description="G-protein coupled receptor 157">
    <location>
        <begin position="1"/>
        <end position="330"/>
    </location>
</feature>
<feature type="topological domain" description="Extracellular" evidence="1">
    <location>
        <begin position="1"/>
        <end position="15"/>
    </location>
</feature>
<feature type="transmembrane region" description="Helical; Name=1" evidence="1">
    <location>
        <begin position="16"/>
        <end position="36"/>
    </location>
</feature>
<feature type="topological domain" description="Cytoplasmic" evidence="1">
    <location>
        <begin position="37"/>
        <end position="48"/>
    </location>
</feature>
<feature type="transmembrane region" description="Helical; Name=2" evidence="1">
    <location>
        <begin position="49"/>
        <end position="69"/>
    </location>
</feature>
<feature type="topological domain" description="Extracellular" evidence="1">
    <location>
        <begin position="70"/>
        <end position="87"/>
    </location>
</feature>
<feature type="transmembrane region" description="Helical; Name=3" evidence="1">
    <location>
        <begin position="88"/>
        <end position="108"/>
    </location>
</feature>
<feature type="topological domain" description="Cytoplasmic" evidence="1">
    <location>
        <begin position="109"/>
        <end position="119"/>
    </location>
</feature>
<feature type="transmembrane region" description="Helical; Name=4" evidence="1">
    <location>
        <begin position="120"/>
        <end position="140"/>
    </location>
</feature>
<feature type="topological domain" description="Extracellular" evidence="1">
    <location>
        <begin position="141"/>
        <end position="166"/>
    </location>
</feature>
<feature type="transmembrane region" description="Helical; Name=5" evidence="1">
    <location>
        <begin position="167"/>
        <end position="187"/>
    </location>
</feature>
<feature type="topological domain" description="Cytoplasmic" evidence="1">
    <location>
        <begin position="188"/>
        <end position="227"/>
    </location>
</feature>
<feature type="transmembrane region" description="Helical; Name=6" evidence="1">
    <location>
        <begin position="228"/>
        <end position="248"/>
    </location>
</feature>
<feature type="topological domain" description="Extracellular" evidence="1">
    <location>
        <begin position="249"/>
        <end position="259"/>
    </location>
</feature>
<feature type="transmembrane region" description="Helical; Name=7" evidence="1">
    <location>
        <begin position="260"/>
        <end position="280"/>
    </location>
</feature>
<feature type="topological domain" description="Cytoplasmic" evidence="1">
    <location>
        <begin position="281"/>
        <end position="330"/>
    </location>
</feature>
<feature type="region of interest" description="Disordered" evidence="2">
    <location>
        <begin position="301"/>
        <end position="330"/>
    </location>
</feature>
<feature type="compositionally biased region" description="Basic and acidic residues" evidence="2">
    <location>
        <begin position="317"/>
        <end position="330"/>
    </location>
</feature>
<feature type="sequence conflict" description="In Ref. 1; BAC40879." evidence="4" ref="1">
    <original>C</original>
    <variation>W</variation>
    <location>
        <position position="296"/>
    </location>
</feature>
<feature type="sequence conflict" description="In Ref. 1; BAC40879." evidence="4" ref="1">
    <original>EVPST</original>
    <variation>RSAQHSGWLSSLSVLALPSWFLLQD</variation>
    <location>
        <begin position="326"/>
        <end position="330"/>
    </location>
</feature>
<organism>
    <name type="scientific">Mus musculus</name>
    <name type="common">Mouse</name>
    <dbReference type="NCBI Taxonomy" id="10090"/>
    <lineage>
        <taxon>Eukaryota</taxon>
        <taxon>Metazoa</taxon>
        <taxon>Chordata</taxon>
        <taxon>Craniata</taxon>
        <taxon>Vertebrata</taxon>
        <taxon>Euteleostomi</taxon>
        <taxon>Mammalia</taxon>
        <taxon>Eutheria</taxon>
        <taxon>Euarchontoglires</taxon>
        <taxon>Glires</taxon>
        <taxon>Rodentia</taxon>
        <taxon>Myomorpha</taxon>
        <taxon>Muroidea</taxon>
        <taxon>Muridae</taxon>
        <taxon>Murinae</taxon>
        <taxon>Mus</taxon>
        <taxon>Mus</taxon>
    </lineage>
</organism>
<proteinExistence type="evidence at protein level"/>
<name>GP157_MOUSE</name>
<evidence type="ECO:0000255" key="1"/>
<evidence type="ECO:0000256" key="2">
    <source>
        <dbReference type="SAM" id="MobiDB-lite"/>
    </source>
</evidence>
<evidence type="ECO:0000269" key="3">
    <source>
    </source>
</evidence>
<evidence type="ECO:0000305" key="4"/>
<comment type="function">
    <text evidence="3">Orphan receptor that promotes neuronal differentiation of radial glial progenitors (RGPs) (PubMed:27142930). The activity of this receptor is mediated by a G(q)-protein that activates a phosphatidylinositol-calcium second messenger (PubMed:27142930).</text>
</comment>
<comment type="subcellular location">
    <subcellularLocation>
        <location evidence="3">Cell projection</location>
        <location evidence="3">Cilium membrane</location>
        <topology evidence="1">Multi-pass membrane protein</topology>
    </subcellularLocation>
    <text evidence="3">Expressed in the primary cilia of radial glial progenitors (RGPs) exposed to the cerebrospinal fluid.</text>
</comment>
<comment type="tissue specificity">
    <text evidence="3">Expressed in the primary cilia of radial glial progenitors (RGPs) in the developing neocortex (PubMed:27142930).</text>
</comment>
<comment type="developmental stage">
    <text evidence="3">Preferential expression during the early to mid stages of corticogenesis. High levels in the early radial glial progenitors from 10 to 17 dpc and gradually decrease thereafter (at protein level) (PubMed:27142930).</text>
</comment>
<comment type="similarity">
    <text evidence="4">Belongs to the G-protein coupled receptor 2 family.</text>
</comment>
<keyword id="KW-1003">Cell membrane</keyword>
<keyword id="KW-0966">Cell projection</keyword>
<keyword id="KW-0217">Developmental protein</keyword>
<keyword id="KW-0221">Differentiation</keyword>
<keyword id="KW-0297">G-protein coupled receptor</keyword>
<keyword id="KW-0472">Membrane</keyword>
<keyword id="KW-0675">Receptor</keyword>
<keyword id="KW-1185">Reference proteome</keyword>
<keyword id="KW-0807">Transducer</keyword>
<keyword id="KW-0812">Transmembrane</keyword>
<keyword id="KW-1133">Transmembrane helix</keyword>
<dbReference type="EMBL" id="AK089544">
    <property type="protein sequence ID" value="BAC40921.1"/>
    <property type="molecule type" value="mRNA"/>
</dbReference>
<dbReference type="EMBL" id="AK089429">
    <property type="protein sequence ID" value="BAC40879.1"/>
    <property type="molecule type" value="mRNA"/>
</dbReference>
<dbReference type="CCDS" id="CCDS38977.1"/>
<dbReference type="RefSeq" id="NP_796340.2">
    <property type="nucleotide sequence ID" value="NM_177366.3"/>
</dbReference>
<dbReference type="SMR" id="Q8C206"/>
<dbReference type="FunCoup" id="Q8C206">
    <property type="interactions" value="38"/>
</dbReference>
<dbReference type="STRING" id="10090.ENSMUSP00000092020"/>
<dbReference type="GlyGen" id="Q8C206">
    <property type="glycosylation" value="1 site"/>
</dbReference>
<dbReference type="iPTMnet" id="Q8C206"/>
<dbReference type="PhosphoSitePlus" id="Q8C206"/>
<dbReference type="PaxDb" id="10090-ENSMUSP00000092020"/>
<dbReference type="Antibodypedia" id="27668">
    <property type="antibodies" value="131 antibodies from 23 providers"/>
</dbReference>
<dbReference type="DNASU" id="269604"/>
<dbReference type="Ensembl" id="ENSMUST00000094451.4">
    <property type="protein sequence ID" value="ENSMUSP00000092020.4"/>
    <property type="gene ID" value="ENSMUSG00000047875.7"/>
</dbReference>
<dbReference type="GeneID" id="269604"/>
<dbReference type="KEGG" id="mmu:269604"/>
<dbReference type="UCSC" id="uc008vxj.1">
    <property type="organism name" value="mouse"/>
</dbReference>
<dbReference type="AGR" id="MGI:2442046"/>
<dbReference type="CTD" id="80045"/>
<dbReference type="MGI" id="MGI:2442046">
    <property type="gene designation" value="Gpr157"/>
</dbReference>
<dbReference type="VEuPathDB" id="HostDB:ENSMUSG00000047875"/>
<dbReference type="eggNOG" id="ENOG502QU1X">
    <property type="taxonomic scope" value="Eukaryota"/>
</dbReference>
<dbReference type="GeneTree" id="ENSGT00390000012992"/>
<dbReference type="HOGENOM" id="CLU_052670_0_0_1"/>
<dbReference type="InParanoid" id="Q8C206"/>
<dbReference type="OMA" id="CIMFVLF"/>
<dbReference type="OrthoDB" id="100006at2759"/>
<dbReference type="PhylomeDB" id="Q8C206"/>
<dbReference type="TreeFam" id="TF330856"/>
<dbReference type="BioGRID-ORCS" id="269604">
    <property type="hits" value="2 hits in 77 CRISPR screens"/>
</dbReference>
<dbReference type="ChiTaRS" id="Gpr157">
    <property type="organism name" value="mouse"/>
</dbReference>
<dbReference type="PRO" id="PR:Q8C206"/>
<dbReference type="Proteomes" id="UP000000589">
    <property type="component" value="Chromosome 4"/>
</dbReference>
<dbReference type="RNAct" id="Q8C206">
    <property type="molecule type" value="protein"/>
</dbReference>
<dbReference type="Bgee" id="ENSMUSG00000047875">
    <property type="expression patterns" value="Expressed in hindlimb stylopod muscle and 48 other cell types or tissues"/>
</dbReference>
<dbReference type="ExpressionAtlas" id="Q8C206">
    <property type="expression patterns" value="baseline and differential"/>
</dbReference>
<dbReference type="GO" id="GO:0060170">
    <property type="term" value="C:ciliary membrane"/>
    <property type="evidence" value="ECO:0000314"/>
    <property type="project" value="UniProtKB"/>
</dbReference>
<dbReference type="GO" id="GO:0004930">
    <property type="term" value="F:G protein-coupled receptor activity"/>
    <property type="evidence" value="ECO:0000315"/>
    <property type="project" value="UniProtKB"/>
</dbReference>
<dbReference type="GO" id="GO:0007166">
    <property type="term" value="P:cell surface receptor signaling pathway"/>
    <property type="evidence" value="ECO:0007669"/>
    <property type="project" value="InterPro"/>
</dbReference>
<dbReference type="GO" id="GO:0048512">
    <property type="term" value="P:circadian behavior"/>
    <property type="evidence" value="ECO:0000315"/>
    <property type="project" value="UniProtKB"/>
</dbReference>
<dbReference type="GO" id="GO:0007200">
    <property type="term" value="P:phospholipase C-activating G protein-coupled receptor signaling pathway"/>
    <property type="evidence" value="ECO:0000315"/>
    <property type="project" value="UniProtKB"/>
</dbReference>
<dbReference type="GO" id="GO:0060019">
    <property type="term" value="P:radial glial cell differentiation"/>
    <property type="evidence" value="ECO:0000315"/>
    <property type="project" value="UniProtKB"/>
</dbReference>
<dbReference type="FunFam" id="1.20.1070.10:FF:000301">
    <property type="entry name" value="G-protein coupled receptor 157"/>
    <property type="match status" value="1"/>
</dbReference>
<dbReference type="Gene3D" id="1.20.1070.10">
    <property type="entry name" value="Rhodopsin 7-helix transmembrane proteins"/>
    <property type="match status" value="1"/>
</dbReference>
<dbReference type="InterPro" id="IPR022343">
    <property type="entry name" value="GCR1-cAMP_receptor"/>
</dbReference>
<dbReference type="InterPro" id="IPR017981">
    <property type="entry name" value="GPCR_2-like_7TM"/>
</dbReference>
<dbReference type="InterPro" id="IPR000832">
    <property type="entry name" value="GPCR_2_secretin-like"/>
</dbReference>
<dbReference type="InterPro" id="IPR017452">
    <property type="entry name" value="GPCR_Rhodpsn_7TM"/>
</dbReference>
<dbReference type="PANTHER" id="PTHR23112">
    <property type="entry name" value="G PROTEIN-COUPLED RECEPTOR 157-RELATED"/>
    <property type="match status" value="1"/>
</dbReference>
<dbReference type="PANTHER" id="PTHR23112:SF47">
    <property type="entry name" value="G-PROTEIN COUPLED RECEPTOR 157"/>
    <property type="match status" value="1"/>
</dbReference>
<dbReference type="Pfam" id="PF00002">
    <property type="entry name" value="7tm_2"/>
    <property type="match status" value="1"/>
</dbReference>
<dbReference type="PRINTS" id="PR02001">
    <property type="entry name" value="GCR1CAMPR"/>
</dbReference>
<dbReference type="SUPFAM" id="SSF81321">
    <property type="entry name" value="Family A G protein-coupled receptor-like"/>
    <property type="match status" value="1"/>
</dbReference>
<dbReference type="PROSITE" id="PS50261">
    <property type="entry name" value="G_PROTEIN_RECEP_F2_4"/>
    <property type="match status" value="1"/>
</dbReference>
<accession>Q8C206</accession>
<accession>Q8C224</accession>